<gene>
    <name evidence="1" type="primary">dtd</name>
    <name type="ordered locus">BCB4264_A4525</name>
</gene>
<evidence type="ECO:0000255" key="1">
    <source>
        <dbReference type="HAMAP-Rule" id="MF_00518"/>
    </source>
</evidence>
<keyword id="KW-0963">Cytoplasm</keyword>
<keyword id="KW-0378">Hydrolase</keyword>
<keyword id="KW-0694">RNA-binding</keyword>
<keyword id="KW-0820">tRNA-binding</keyword>
<comment type="function">
    <text evidence="1">An aminoacyl-tRNA editing enzyme that deacylates mischarged D-aminoacyl-tRNAs. Also deacylates mischarged glycyl-tRNA(Ala), protecting cells against glycine mischarging by AlaRS. Acts via tRNA-based rather than protein-based catalysis; rejects L-amino acids rather than detecting D-amino acids in the active site. By recycling D-aminoacyl-tRNA to D-amino acids and free tRNA molecules, this enzyme counteracts the toxicity associated with the formation of D-aminoacyl-tRNA entities in vivo and helps enforce protein L-homochirality.</text>
</comment>
<comment type="catalytic activity">
    <reaction evidence="1">
        <text>glycyl-tRNA(Ala) + H2O = tRNA(Ala) + glycine + H(+)</text>
        <dbReference type="Rhea" id="RHEA:53744"/>
        <dbReference type="Rhea" id="RHEA-COMP:9657"/>
        <dbReference type="Rhea" id="RHEA-COMP:13640"/>
        <dbReference type="ChEBI" id="CHEBI:15377"/>
        <dbReference type="ChEBI" id="CHEBI:15378"/>
        <dbReference type="ChEBI" id="CHEBI:57305"/>
        <dbReference type="ChEBI" id="CHEBI:78442"/>
        <dbReference type="ChEBI" id="CHEBI:78522"/>
        <dbReference type="EC" id="3.1.1.96"/>
    </reaction>
</comment>
<comment type="catalytic activity">
    <reaction evidence="1">
        <text>a D-aminoacyl-tRNA + H2O = a tRNA + a D-alpha-amino acid + H(+)</text>
        <dbReference type="Rhea" id="RHEA:13953"/>
        <dbReference type="Rhea" id="RHEA-COMP:10123"/>
        <dbReference type="Rhea" id="RHEA-COMP:10124"/>
        <dbReference type="ChEBI" id="CHEBI:15377"/>
        <dbReference type="ChEBI" id="CHEBI:15378"/>
        <dbReference type="ChEBI" id="CHEBI:59871"/>
        <dbReference type="ChEBI" id="CHEBI:78442"/>
        <dbReference type="ChEBI" id="CHEBI:79333"/>
        <dbReference type="EC" id="3.1.1.96"/>
    </reaction>
</comment>
<comment type="subunit">
    <text evidence="1">Homodimer.</text>
</comment>
<comment type="subcellular location">
    <subcellularLocation>
        <location evidence="1">Cytoplasm</location>
    </subcellularLocation>
</comment>
<comment type="domain">
    <text evidence="1">A Gly-cisPro motif from one monomer fits into the active site of the other monomer to allow specific chiral rejection of L-amino acids.</text>
</comment>
<comment type="similarity">
    <text evidence="1">Belongs to the DTD family.</text>
</comment>
<dbReference type="EC" id="3.1.1.96" evidence="1"/>
<dbReference type="EMBL" id="CP001176">
    <property type="protein sequence ID" value="ACK61121.1"/>
    <property type="molecule type" value="Genomic_DNA"/>
</dbReference>
<dbReference type="RefSeq" id="WP_001266961.1">
    <property type="nucleotide sequence ID" value="NC_011725.1"/>
</dbReference>
<dbReference type="SMR" id="B7HE40"/>
<dbReference type="KEGG" id="bcb:BCB4264_A4525"/>
<dbReference type="HOGENOM" id="CLU_076901_1_0_9"/>
<dbReference type="Proteomes" id="UP000007096">
    <property type="component" value="Chromosome"/>
</dbReference>
<dbReference type="GO" id="GO:0005737">
    <property type="term" value="C:cytoplasm"/>
    <property type="evidence" value="ECO:0007669"/>
    <property type="project" value="UniProtKB-SubCell"/>
</dbReference>
<dbReference type="GO" id="GO:0051500">
    <property type="term" value="F:D-tyrosyl-tRNA(Tyr) deacylase activity"/>
    <property type="evidence" value="ECO:0007669"/>
    <property type="project" value="TreeGrafter"/>
</dbReference>
<dbReference type="GO" id="GO:0106026">
    <property type="term" value="F:Gly-tRNA(Ala) deacylase activity"/>
    <property type="evidence" value="ECO:0007669"/>
    <property type="project" value="UniProtKB-UniRule"/>
</dbReference>
<dbReference type="GO" id="GO:0043908">
    <property type="term" value="F:Ser(Gly)-tRNA(Ala) hydrolase activity"/>
    <property type="evidence" value="ECO:0007669"/>
    <property type="project" value="UniProtKB-UniRule"/>
</dbReference>
<dbReference type="GO" id="GO:0000049">
    <property type="term" value="F:tRNA binding"/>
    <property type="evidence" value="ECO:0007669"/>
    <property type="project" value="UniProtKB-UniRule"/>
</dbReference>
<dbReference type="GO" id="GO:0019478">
    <property type="term" value="P:D-amino acid catabolic process"/>
    <property type="evidence" value="ECO:0007669"/>
    <property type="project" value="UniProtKB-UniRule"/>
</dbReference>
<dbReference type="CDD" id="cd00563">
    <property type="entry name" value="Dtyr_deacylase"/>
    <property type="match status" value="1"/>
</dbReference>
<dbReference type="FunFam" id="3.50.80.10:FF:000001">
    <property type="entry name" value="D-aminoacyl-tRNA deacylase"/>
    <property type="match status" value="1"/>
</dbReference>
<dbReference type="Gene3D" id="3.50.80.10">
    <property type="entry name" value="D-tyrosyl-tRNA(Tyr) deacylase"/>
    <property type="match status" value="1"/>
</dbReference>
<dbReference type="HAMAP" id="MF_00518">
    <property type="entry name" value="Deacylase_Dtd"/>
    <property type="match status" value="1"/>
</dbReference>
<dbReference type="InterPro" id="IPR003732">
    <property type="entry name" value="Daa-tRNA_deacyls_DTD"/>
</dbReference>
<dbReference type="InterPro" id="IPR023509">
    <property type="entry name" value="DTD-like_sf"/>
</dbReference>
<dbReference type="NCBIfam" id="TIGR00256">
    <property type="entry name" value="D-aminoacyl-tRNA deacylase"/>
    <property type="match status" value="1"/>
</dbReference>
<dbReference type="PANTHER" id="PTHR10472:SF5">
    <property type="entry name" value="D-AMINOACYL-TRNA DEACYLASE 1"/>
    <property type="match status" value="1"/>
</dbReference>
<dbReference type="PANTHER" id="PTHR10472">
    <property type="entry name" value="D-TYROSYL-TRNA TYR DEACYLASE"/>
    <property type="match status" value="1"/>
</dbReference>
<dbReference type="Pfam" id="PF02580">
    <property type="entry name" value="Tyr_Deacylase"/>
    <property type="match status" value="1"/>
</dbReference>
<dbReference type="SUPFAM" id="SSF69500">
    <property type="entry name" value="DTD-like"/>
    <property type="match status" value="1"/>
</dbReference>
<proteinExistence type="inferred from homology"/>
<protein>
    <recommendedName>
        <fullName evidence="1">D-aminoacyl-tRNA deacylase</fullName>
        <shortName evidence="1">DTD</shortName>
        <ecNumber evidence="1">3.1.1.96</ecNumber>
    </recommendedName>
    <alternativeName>
        <fullName evidence="1">Gly-tRNA(Ala) deacylase</fullName>
    </alternativeName>
</protein>
<sequence length="146" mass="16311">MRVVLQRSKKASVAVDGEIVGQIPFGLTLLVGITHEDTEKDATYIAEKIANLRIFEDESGKMNHSVLDVEGQVLSISQFTLYGDCRKGRRPNFMDAAKPDYAERLYDFFNEEVRKQGLHVETGKFGAMMDVSLINDGPVTLIVESK</sequence>
<organism>
    <name type="scientific">Bacillus cereus (strain B4264)</name>
    <dbReference type="NCBI Taxonomy" id="405532"/>
    <lineage>
        <taxon>Bacteria</taxon>
        <taxon>Bacillati</taxon>
        <taxon>Bacillota</taxon>
        <taxon>Bacilli</taxon>
        <taxon>Bacillales</taxon>
        <taxon>Bacillaceae</taxon>
        <taxon>Bacillus</taxon>
        <taxon>Bacillus cereus group</taxon>
    </lineage>
</organism>
<reference key="1">
    <citation type="submission" date="2008-10" db="EMBL/GenBank/DDBJ databases">
        <title>Genome sequence of Bacillus cereus B4264.</title>
        <authorList>
            <person name="Dodson R.J."/>
            <person name="Durkin A.S."/>
            <person name="Rosovitz M.J."/>
            <person name="Rasko D.A."/>
            <person name="Hoffmaster A."/>
            <person name="Ravel J."/>
            <person name="Sutton G."/>
        </authorList>
    </citation>
    <scope>NUCLEOTIDE SEQUENCE [LARGE SCALE GENOMIC DNA]</scope>
    <source>
        <strain>B4264</strain>
    </source>
</reference>
<name>DTD_BACC4</name>
<accession>B7HE40</accession>
<feature type="chain" id="PRO_1000127493" description="D-aminoacyl-tRNA deacylase">
    <location>
        <begin position="1"/>
        <end position="146"/>
    </location>
</feature>
<feature type="short sequence motif" description="Gly-cisPro motif, important for rejection of L-amino acids" evidence="1">
    <location>
        <begin position="137"/>
        <end position="138"/>
    </location>
</feature>